<gene>
    <name type="primary">trpG</name>
    <name type="ordered locus">VC_1173</name>
</gene>
<accession>Q9KST3</accession>
<evidence type="ECO:0000250" key="1"/>
<evidence type="ECO:0000250" key="2">
    <source>
        <dbReference type="UniProtKB" id="P00900"/>
    </source>
</evidence>
<evidence type="ECO:0000255" key="3">
    <source>
        <dbReference type="PROSITE-ProRule" id="PRU00605"/>
    </source>
</evidence>
<evidence type="ECO:0000305" key="4"/>
<dbReference type="EC" id="4.1.3.27"/>
<dbReference type="EMBL" id="AE003852">
    <property type="protein sequence ID" value="AAF94332.1"/>
    <property type="status" value="ALT_INIT"/>
    <property type="molecule type" value="Genomic_DNA"/>
</dbReference>
<dbReference type="PIR" id="H82232">
    <property type="entry name" value="H82232"/>
</dbReference>
<dbReference type="RefSeq" id="NP_230818.1">
    <property type="nucleotide sequence ID" value="NC_002505.1"/>
</dbReference>
<dbReference type="RefSeq" id="WP_001274036.1">
    <property type="nucleotide sequence ID" value="NZ_LT906614.1"/>
</dbReference>
<dbReference type="SMR" id="Q9KST3"/>
<dbReference type="STRING" id="243277.VC_1173"/>
<dbReference type="MEROPS" id="C26.960"/>
<dbReference type="DNASU" id="2614606"/>
<dbReference type="EnsemblBacteria" id="AAF94332">
    <property type="protein sequence ID" value="AAF94332"/>
    <property type="gene ID" value="VC_1173"/>
</dbReference>
<dbReference type="KEGG" id="vch:VC_1173"/>
<dbReference type="PATRIC" id="fig|243277.26.peg.1122"/>
<dbReference type="eggNOG" id="COG0512">
    <property type="taxonomic scope" value="Bacteria"/>
</dbReference>
<dbReference type="HOGENOM" id="CLU_014340_1_0_6"/>
<dbReference type="UniPathway" id="UPA00035">
    <property type="reaction ID" value="UER00040"/>
</dbReference>
<dbReference type="Proteomes" id="UP000000584">
    <property type="component" value="Chromosome 1"/>
</dbReference>
<dbReference type="GO" id="GO:0004048">
    <property type="term" value="F:anthranilate phosphoribosyltransferase activity"/>
    <property type="evidence" value="ECO:0000318"/>
    <property type="project" value="GO_Central"/>
</dbReference>
<dbReference type="GO" id="GO:0004049">
    <property type="term" value="F:anthranilate synthase activity"/>
    <property type="evidence" value="ECO:0007669"/>
    <property type="project" value="UniProtKB-EC"/>
</dbReference>
<dbReference type="GO" id="GO:0000162">
    <property type="term" value="P:L-tryptophan biosynthetic process"/>
    <property type="evidence" value="ECO:0000318"/>
    <property type="project" value="GO_Central"/>
</dbReference>
<dbReference type="GO" id="GO:0002047">
    <property type="term" value="P:phenazine biosynthetic process"/>
    <property type="evidence" value="ECO:0000318"/>
    <property type="project" value="GO_Central"/>
</dbReference>
<dbReference type="CDD" id="cd01743">
    <property type="entry name" value="GATase1_Anthranilate_Synthase"/>
    <property type="match status" value="1"/>
</dbReference>
<dbReference type="FunFam" id="3.40.50.880:FF:000003">
    <property type="entry name" value="Anthranilate synthase component II"/>
    <property type="match status" value="1"/>
</dbReference>
<dbReference type="Gene3D" id="3.40.50.880">
    <property type="match status" value="1"/>
</dbReference>
<dbReference type="InterPro" id="IPR050472">
    <property type="entry name" value="Anth_synth/Amidotransfase"/>
</dbReference>
<dbReference type="InterPro" id="IPR029062">
    <property type="entry name" value="Class_I_gatase-like"/>
</dbReference>
<dbReference type="InterPro" id="IPR017926">
    <property type="entry name" value="GATASE"/>
</dbReference>
<dbReference type="InterPro" id="IPR006221">
    <property type="entry name" value="TrpG/PapA_dom"/>
</dbReference>
<dbReference type="NCBIfam" id="TIGR00566">
    <property type="entry name" value="trpG_papA"/>
    <property type="match status" value="1"/>
</dbReference>
<dbReference type="PANTHER" id="PTHR43418:SF2">
    <property type="entry name" value="BIFUNCTIONAL PROTEIN TRPGD"/>
    <property type="match status" value="1"/>
</dbReference>
<dbReference type="PANTHER" id="PTHR43418">
    <property type="entry name" value="MULTIFUNCTIONAL TRYPTOPHAN BIOSYNTHESIS PROTEIN-RELATED"/>
    <property type="match status" value="1"/>
</dbReference>
<dbReference type="Pfam" id="PF00117">
    <property type="entry name" value="GATase"/>
    <property type="match status" value="1"/>
</dbReference>
<dbReference type="PRINTS" id="PR00097">
    <property type="entry name" value="ANTSNTHASEII"/>
</dbReference>
<dbReference type="PRINTS" id="PR00099">
    <property type="entry name" value="CPSGATASE"/>
</dbReference>
<dbReference type="PRINTS" id="PR00096">
    <property type="entry name" value="GATASE"/>
</dbReference>
<dbReference type="SUPFAM" id="SSF52317">
    <property type="entry name" value="Class I glutamine amidotransferase-like"/>
    <property type="match status" value="1"/>
</dbReference>
<dbReference type="PROSITE" id="PS51273">
    <property type="entry name" value="GATASE_TYPE_1"/>
    <property type="match status" value="1"/>
</dbReference>
<protein>
    <recommendedName>
        <fullName>Anthranilate synthase component 2</fullName>
        <shortName>AS</shortName>
        <shortName>ASII</shortName>
        <ecNumber>4.1.3.27</ecNumber>
    </recommendedName>
    <alternativeName>
        <fullName>Anthranilate synthase, GATase component</fullName>
    </alternativeName>
    <alternativeName>
        <fullName>Anthranilate synthase, glutamine amidotransferase component</fullName>
    </alternativeName>
</protein>
<keyword id="KW-0028">Amino-acid biosynthesis</keyword>
<keyword id="KW-0057">Aromatic amino acid biosynthesis</keyword>
<keyword id="KW-0315">Glutamine amidotransferase</keyword>
<keyword id="KW-0456">Lyase</keyword>
<keyword id="KW-1185">Reference proteome</keyword>
<keyword id="KW-0822">Tryptophan biosynthesis</keyword>
<name>TRPG_VIBCH</name>
<sequence>MANILFIDNFDSFTYNLVDQFRSLGHVVTIYRNNLSADAIEQALLQLDNPVVVLSPGPGAPSETGCMPELLQRLKGKVPMIGICLGHQAIVEAYGGVVAGAGEIIHGKVSMMEHQNHAIYRGLPSPLAIARYHSLVATQVPSALTVTAEVNGLVMSVVNEADKVCGFQFHPESIMTTHGATLLANAIDWALSSTPAQTQFA</sequence>
<proteinExistence type="inferred from homology"/>
<organism>
    <name type="scientific">Vibrio cholerae serotype O1 (strain ATCC 39315 / El Tor Inaba N16961)</name>
    <dbReference type="NCBI Taxonomy" id="243277"/>
    <lineage>
        <taxon>Bacteria</taxon>
        <taxon>Pseudomonadati</taxon>
        <taxon>Pseudomonadota</taxon>
        <taxon>Gammaproteobacteria</taxon>
        <taxon>Vibrionales</taxon>
        <taxon>Vibrionaceae</taxon>
        <taxon>Vibrio</taxon>
    </lineage>
</organism>
<reference key="1">
    <citation type="journal article" date="2000" name="Nature">
        <title>DNA sequence of both chromosomes of the cholera pathogen Vibrio cholerae.</title>
        <authorList>
            <person name="Heidelberg J.F."/>
            <person name="Eisen J.A."/>
            <person name="Nelson W.C."/>
            <person name="Clayton R.A."/>
            <person name="Gwinn M.L."/>
            <person name="Dodson R.J."/>
            <person name="Haft D.H."/>
            <person name="Hickey E.K."/>
            <person name="Peterson J.D."/>
            <person name="Umayam L.A."/>
            <person name="Gill S.R."/>
            <person name="Nelson K.E."/>
            <person name="Read T.D."/>
            <person name="Tettelin H."/>
            <person name="Richardson D.L."/>
            <person name="Ermolaeva M.D."/>
            <person name="Vamathevan J.J."/>
            <person name="Bass S."/>
            <person name="Qin H."/>
            <person name="Dragoi I."/>
            <person name="Sellers P."/>
            <person name="McDonald L.A."/>
            <person name="Utterback T.R."/>
            <person name="Fleischmann R.D."/>
            <person name="Nierman W.C."/>
            <person name="White O."/>
            <person name="Salzberg S.L."/>
            <person name="Smith H.O."/>
            <person name="Colwell R.R."/>
            <person name="Mekalanos J.J."/>
            <person name="Venter J.C."/>
            <person name="Fraser C.M."/>
        </authorList>
    </citation>
    <scope>NUCLEOTIDE SEQUENCE [LARGE SCALE GENOMIC DNA]</scope>
    <source>
        <strain>ATCC 39315 / El Tor Inaba N16961</strain>
    </source>
</reference>
<comment type="function">
    <text evidence="1">Part of a heterotetrameric complex that catalyzes the two-step biosynthesis of anthranilate, an intermediate in the biosynthesis of L-tryptophan. In the first step, the glutamine-binding beta subunit (TrpG) of anthranilate synthase (AS) provides the glutamine amidotransferase activity which generates ammonia as a substrate that, along with chorismate, is used in the second step, catalyzed by the large alpha subunit of AS (TrpE) to produce anthranilate. In the absence of TrpG, TrpE can synthesize anthranilate directly from chorismate and high concentrations of ammonia (By similarity).</text>
</comment>
<comment type="catalytic activity">
    <reaction>
        <text>chorismate + L-glutamine = anthranilate + pyruvate + L-glutamate + H(+)</text>
        <dbReference type="Rhea" id="RHEA:21732"/>
        <dbReference type="ChEBI" id="CHEBI:15361"/>
        <dbReference type="ChEBI" id="CHEBI:15378"/>
        <dbReference type="ChEBI" id="CHEBI:16567"/>
        <dbReference type="ChEBI" id="CHEBI:29748"/>
        <dbReference type="ChEBI" id="CHEBI:29985"/>
        <dbReference type="ChEBI" id="CHEBI:58359"/>
        <dbReference type="EC" id="4.1.3.27"/>
    </reaction>
</comment>
<comment type="pathway">
    <text>Amino-acid biosynthesis; L-tryptophan biosynthesis; L-tryptophan from chorismate: step 1/5.</text>
</comment>
<comment type="subunit">
    <text evidence="1">Heterotetramer consisting of two non-identical subunits: a beta subunit (TrpG) and a large alpha subunit (TrpE).</text>
</comment>
<comment type="sequence caution" evidence="4">
    <conflict type="erroneous initiation">
        <sequence resource="EMBL-CDS" id="AAF94332"/>
    </conflict>
    <text>Extended N-terminus.</text>
</comment>
<feature type="chain" id="PRO_0000056903" description="Anthranilate synthase component 2">
    <location>
        <begin position="1"/>
        <end position="201"/>
    </location>
</feature>
<feature type="domain" description="Glutamine amidotransferase type-1" evidence="3">
    <location>
        <begin position="3"/>
        <end position="196"/>
    </location>
</feature>
<feature type="active site" description="Nucleophile; for GATase activity" evidence="3">
    <location>
        <position position="84"/>
    </location>
</feature>
<feature type="active site" description="For GATase activity" evidence="3">
    <location>
        <position position="170"/>
    </location>
</feature>
<feature type="active site" description="For GATase activity" evidence="3">
    <location>
        <position position="172"/>
    </location>
</feature>
<feature type="binding site" evidence="2">
    <location>
        <begin position="57"/>
        <end position="59"/>
    </location>
    <ligand>
        <name>L-glutamine</name>
        <dbReference type="ChEBI" id="CHEBI:58359"/>
    </ligand>
</feature>
<feature type="binding site" evidence="2">
    <location>
        <position position="88"/>
    </location>
    <ligand>
        <name>L-glutamine</name>
        <dbReference type="ChEBI" id="CHEBI:58359"/>
    </ligand>
</feature>
<feature type="binding site" evidence="2">
    <location>
        <begin position="134"/>
        <end position="135"/>
    </location>
    <ligand>
        <name>L-glutamine</name>
        <dbReference type="ChEBI" id="CHEBI:58359"/>
    </ligand>
</feature>